<evidence type="ECO:0000255" key="1"/>
<evidence type="ECO:0000255" key="2">
    <source>
        <dbReference type="HAMAP-Rule" id="MF_01545"/>
    </source>
</evidence>
<name>AAEB_SALCH</name>
<reference key="1">
    <citation type="journal article" date="2005" name="Nucleic Acids Res.">
        <title>The genome sequence of Salmonella enterica serovar Choleraesuis, a highly invasive and resistant zoonotic pathogen.</title>
        <authorList>
            <person name="Chiu C.-H."/>
            <person name="Tang P."/>
            <person name="Chu C."/>
            <person name="Hu S."/>
            <person name="Bao Q."/>
            <person name="Yu J."/>
            <person name="Chou Y.-Y."/>
            <person name="Wang H.-S."/>
            <person name="Lee Y.-S."/>
        </authorList>
    </citation>
    <scope>NUCLEOTIDE SEQUENCE [LARGE SCALE GENOMIC DNA]</scope>
    <source>
        <strain>SC-B67</strain>
    </source>
</reference>
<sequence>MGIFSIANQHIRFAVKLACAIVLALFIGFHFQLETPRWAVLTAAIVAAGPAFAAGGEPYSGAIRYRGMLRIIGTFIGCIAALIIIISMIRAPLLMILVCCVWAGFCTWISSLVRIENSYAWGLSGYTALIIVITIQTEPLLTPQFALERCSEIVIGIGCAILADLLFSPRSIKQEVDRELDSLLVAQYQLMQLCIKHGDSEEVDNAWGDLVRRTAALEGMRSNLNMESSRWVRANRRLKALNTLSLTLITQSCETYLIQNTRPELITDTFRELFETPVETVQDVHRQLKRMRRVIVWTGERETPVTLYSWVGAATRYLLLKRGVISNTKISATEEEILQGEPVVKVESAERHHAMVNFWRTTLSCILGTLFWLWTGWTSGNGAMVMIAVVTSLAMRLPNPRMVCIDFIYGTLAALPLGLLYFLVIIPNTQQSMLLLCLSLAVLGFFIGIEVQKRRLGSMGALASTINIIVLDNPMTFHFSQFLDSALGQIVGCMLAFIVILLVRDKSKDRTGRVLLNQFVSAAVSAMTTNVVRRKENRLPALYQQLFLLMNKFPGDLPKFRLALTMIIAHQRLRDAPIPVNEDLSVFHRQLRRTADHVISAGSDDKRRRYFGQLLDELDIYQEKLRIWEAPPQVTEPVKRLTGMLHKYQNALTDS</sequence>
<comment type="function">
    <text evidence="2">Forms an efflux pump with AaeA. Could function as a metabolic relief valve, allowing to eliminate certain compounds when they accumulate to high levels in the cell.</text>
</comment>
<comment type="subcellular location">
    <subcellularLocation>
        <location evidence="2">Cell inner membrane</location>
        <topology evidence="2">Multi-pass membrane protein</topology>
    </subcellularLocation>
</comment>
<comment type="similarity">
    <text evidence="2">Belongs to the aromatic acid exporter ArAE (TC 2.A.85) family.</text>
</comment>
<proteinExistence type="inferred from homology"/>
<feature type="chain" id="PRO_0000210081" description="p-hydroxybenzoic acid efflux pump subunit AaeB">
    <location>
        <begin position="1"/>
        <end position="655"/>
    </location>
</feature>
<feature type="topological domain" description="Periplasmic" evidence="1">
    <location>
        <begin position="1"/>
        <end position="12"/>
    </location>
</feature>
<feature type="transmembrane region" description="Helical" evidence="2">
    <location>
        <begin position="13"/>
        <end position="33"/>
    </location>
</feature>
<feature type="topological domain" description="Cytoplasmic" evidence="1">
    <location>
        <begin position="34"/>
        <end position="37"/>
    </location>
</feature>
<feature type="transmembrane region" description="Helical" evidence="2">
    <location>
        <begin position="38"/>
        <end position="58"/>
    </location>
</feature>
<feature type="topological domain" description="Periplasmic" evidence="1">
    <location>
        <begin position="59"/>
        <end position="68"/>
    </location>
</feature>
<feature type="transmembrane region" description="Helical" evidence="2">
    <location>
        <begin position="69"/>
        <end position="89"/>
    </location>
</feature>
<feature type="topological domain" description="Cytoplasmic" evidence="1">
    <location>
        <begin position="90"/>
        <end position="92"/>
    </location>
</feature>
<feature type="transmembrane region" description="Helical" evidence="2">
    <location>
        <begin position="93"/>
        <end position="113"/>
    </location>
</feature>
<feature type="topological domain" description="Periplasmic" evidence="1">
    <location>
        <begin position="114"/>
        <end position="120"/>
    </location>
</feature>
<feature type="transmembrane region" description="Helical" evidence="2">
    <location>
        <begin position="121"/>
        <end position="141"/>
    </location>
</feature>
<feature type="topological domain" description="Cytoplasmic" evidence="1">
    <location>
        <begin position="142"/>
        <end position="151"/>
    </location>
</feature>
<feature type="transmembrane region" description="Helical" evidence="2">
    <location>
        <begin position="152"/>
        <end position="172"/>
    </location>
</feature>
<feature type="topological domain" description="Periplasmic" evidence="1">
    <location>
        <begin position="173"/>
        <end position="369"/>
    </location>
</feature>
<feature type="transmembrane region" description="Helical" evidence="2">
    <location>
        <begin position="370"/>
        <end position="390"/>
    </location>
</feature>
<feature type="topological domain" description="Cytoplasmic" evidence="1">
    <location>
        <begin position="391"/>
        <end position="406"/>
    </location>
</feature>
<feature type="transmembrane region" description="Helical" evidence="2">
    <location>
        <begin position="407"/>
        <end position="427"/>
    </location>
</feature>
<feature type="topological domain" description="Periplasmic" evidence="1">
    <location>
        <begin position="428"/>
        <end position="430"/>
    </location>
</feature>
<feature type="transmembrane region" description="Helical" evidence="2">
    <location>
        <begin position="431"/>
        <end position="451"/>
    </location>
</feature>
<feature type="topological domain" description="Cytoplasmic" evidence="1">
    <location>
        <begin position="452"/>
        <end position="458"/>
    </location>
</feature>
<feature type="transmembrane region" description="Helical" evidence="2">
    <location>
        <begin position="459"/>
        <end position="479"/>
    </location>
</feature>
<feature type="topological domain" description="Periplasmic" evidence="1">
    <location>
        <begin position="480"/>
        <end position="481"/>
    </location>
</feature>
<feature type="transmembrane region" description="Helical" evidence="2">
    <location>
        <begin position="482"/>
        <end position="502"/>
    </location>
</feature>
<feature type="topological domain" description="Cytoplasmic" evidence="1">
    <location>
        <begin position="503"/>
        <end position="655"/>
    </location>
</feature>
<gene>
    <name evidence="2" type="primary">aaeB</name>
    <name type="ordered locus">SCH_3302</name>
</gene>
<keyword id="KW-0997">Cell inner membrane</keyword>
<keyword id="KW-1003">Cell membrane</keyword>
<keyword id="KW-0472">Membrane</keyword>
<keyword id="KW-0812">Transmembrane</keyword>
<keyword id="KW-1133">Transmembrane helix</keyword>
<keyword id="KW-0813">Transport</keyword>
<organism>
    <name type="scientific">Salmonella choleraesuis (strain SC-B67)</name>
    <dbReference type="NCBI Taxonomy" id="321314"/>
    <lineage>
        <taxon>Bacteria</taxon>
        <taxon>Pseudomonadati</taxon>
        <taxon>Pseudomonadota</taxon>
        <taxon>Gammaproteobacteria</taxon>
        <taxon>Enterobacterales</taxon>
        <taxon>Enterobacteriaceae</taxon>
        <taxon>Salmonella</taxon>
    </lineage>
</organism>
<protein>
    <recommendedName>
        <fullName evidence="2">p-hydroxybenzoic acid efflux pump subunit AaeB</fullName>
        <shortName evidence="2">pHBA efflux pump protein B</shortName>
    </recommendedName>
</protein>
<accession>Q57JA4</accession>
<dbReference type="EMBL" id="AE017220">
    <property type="protein sequence ID" value="AAX67208.1"/>
    <property type="molecule type" value="Genomic_DNA"/>
</dbReference>
<dbReference type="RefSeq" id="WP_000510913.1">
    <property type="nucleotide sequence ID" value="NC_006905.1"/>
</dbReference>
<dbReference type="SMR" id="Q57JA4"/>
<dbReference type="KEGG" id="sec:SCH_3302"/>
<dbReference type="HOGENOM" id="CLU_027647_0_0_6"/>
<dbReference type="Proteomes" id="UP000000538">
    <property type="component" value="Chromosome"/>
</dbReference>
<dbReference type="GO" id="GO:0005886">
    <property type="term" value="C:plasma membrane"/>
    <property type="evidence" value="ECO:0007669"/>
    <property type="project" value="UniProtKB-SubCell"/>
</dbReference>
<dbReference type="GO" id="GO:0022857">
    <property type="term" value="F:transmembrane transporter activity"/>
    <property type="evidence" value="ECO:0007669"/>
    <property type="project" value="UniProtKB-UniRule"/>
</dbReference>
<dbReference type="GO" id="GO:0046942">
    <property type="term" value="P:carboxylic acid transport"/>
    <property type="evidence" value="ECO:0007669"/>
    <property type="project" value="InterPro"/>
</dbReference>
<dbReference type="HAMAP" id="MF_01545">
    <property type="entry name" value="AaeB"/>
    <property type="match status" value="1"/>
</dbReference>
<dbReference type="InterPro" id="IPR006726">
    <property type="entry name" value="PHBA_efflux_AaeB/fusaric-R"/>
</dbReference>
<dbReference type="InterPro" id="IPR023706">
    <property type="entry name" value="PHBA_efflux_pump_AaeB"/>
</dbReference>
<dbReference type="NCBIfam" id="NF007916">
    <property type="entry name" value="PRK10631.1"/>
    <property type="match status" value="1"/>
</dbReference>
<dbReference type="PANTHER" id="PTHR30509:SF9">
    <property type="entry name" value="MULTIDRUG RESISTANCE PROTEIN MDTO"/>
    <property type="match status" value="1"/>
</dbReference>
<dbReference type="PANTHER" id="PTHR30509">
    <property type="entry name" value="P-HYDROXYBENZOIC ACID EFFLUX PUMP SUBUNIT-RELATED"/>
    <property type="match status" value="1"/>
</dbReference>
<dbReference type="Pfam" id="PF04632">
    <property type="entry name" value="FUSC"/>
    <property type="match status" value="1"/>
</dbReference>